<gene>
    <name evidence="1" type="primary">trmA</name>
    <name type="ordered locus">NGK_1555</name>
</gene>
<protein>
    <recommendedName>
        <fullName evidence="1">tRNA/tmRNA (uracil-C(5))-methyltransferase</fullName>
        <ecNumber evidence="1">2.1.1.-</ecNumber>
        <ecNumber evidence="1">2.1.1.35</ecNumber>
    </recommendedName>
    <alternativeName>
        <fullName evidence="1">tRNA (uracil(54)-C(5))-methyltransferase</fullName>
    </alternativeName>
    <alternativeName>
        <fullName evidence="1">tRNA(m5U54)-methyltransferase</fullName>
        <shortName evidence="1">RUMT</shortName>
    </alternativeName>
    <alternativeName>
        <fullName evidence="1">tmRNA (uracil(341)-C(5))-methyltransferase</fullName>
    </alternativeName>
</protein>
<proteinExistence type="inferred from homology"/>
<feature type="chain" id="PRO_0000388558" description="tRNA/tmRNA (uracil-C(5))-methyltransferase">
    <location>
        <begin position="1"/>
        <end position="362"/>
    </location>
</feature>
<feature type="active site" description="Nucleophile" evidence="1">
    <location>
        <position position="318"/>
    </location>
</feature>
<feature type="active site" description="Proton acceptor" evidence="1">
    <location>
        <position position="352"/>
    </location>
</feature>
<feature type="binding site" evidence="1">
    <location>
        <position position="182"/>
    </location>
    <ligand>
        <name>S-adenosyl-L-methionine</name>
        <dbReference type="ChEBI" id="CHEBI:59789"/>
    </ligand>
</feature>
<feature type="binding site" evidence="1">
    <location>
        <position position="210"/>
    </location>
    <ligand>
        <name>S-adenosyl-L-methionine</name>
        <dbReference type="ChEBI" id="CHEBI:59789"/>
    </ligand>
</feature>
<feature type="binding site" evidence="1">
    <location>
        <position position="215"/>
    </location>
    <ligand>
        <name>S-adenosyl-L-methionine</name>
        <dbReference type="ChEBI" id="CHEBI:59789"/>
    </ligand>
</feature>
<feature type="binding site" evidence="1">
    <location>
        <position position="231"/>
    </location>
    <ligand>
        <name>S-adenosyl-L-methionine</name>
        <dbReference type="ChEBI" id="CHEBI:59789"/>
    </ligand>
</feature>
<feature type="binding site" evidence="1">
    <location>
        <position position="293"/>
    </location>
    <ligand>
        <name>S-adenosyl-L-methionine</name>
        <dbReference type="ChEBI" id="CHEBI:59789"/>
    </ligand>
</feature>
<evidence type="ECO:0000255" key="1">
    <source>
        <dbReference type="HAMAP-Rule" id="MF_01011"/>
    </source>
</evidence>
<organism>
    <name type="scientific">Neisseria gonorrhoeae (strain NCCP11945)</name>
    <dbReference type="NCBI Taxonomy" id="521006"/>
    <lineage>
        <taxon>Bacteria</taxon>
        <taxon>Pseudomonadati</taxon>
        <taxon>Pseudomonadota</taxon>
        <taxon>Betaproteobacteria</taxon>
        <taxon>Neisseriales</taxon>
        <taxon>Neisseriaceae</taxon>
        <taxon>Neisseria</taxon>
    </lineage>
</organism>
<accession>B4RN45</accession>
<comment type="function">
    <text evidence="1">Dual-specificity methyltransferase that catalyzes the formation of 5-methyluridine at position 54 (m5U54) in all tRNAs, and that of position 341 (m5U341) in tmRNA (transfer-mRNA).</text>
</comment>
<comment type="catalytic activity">
    <reaction evidence="1">
        <text>uridine(54) in tRNA + S-adenosyl-L-methionine = 5-methyluridine(54) in tRNA + S-adenosyl-L-homocysteine + H(+)</text>
        <dbReference type="Rhea" id="RHEA:42712"/>
        <dbReference type="Rhea" id="RHEA-COMP:10167"/>
        <dbReference type="Rhea" id="RHEA-COMP:10193"/>
        <dbReference type="ChEBI" id="CHEBI:15378"/>
        <dbReference type="ChEBI" id="CHEBI:57856"/>
        <dbReference type="ChEBI" id="CHEBI:59789"/>
        <dbReference type="ChEBI" id="CHEBI:65315"/>
        <dbReference type="ChEBI" id="CHEBI:74447"/>
        <dbReference type="EC" id="2.1.1.35"/>
    </reaction>
</comment>
<comment type="catalytic activity">
    <reaction evidence="1">
        <text>uridine(341) in tmRNA + S-adenosyl-L-methionine = 5-methyluridine(341) in tmRNA + S-adenosyl-L-homocysteine + H(+)</text>
        <dbReference type="Rhea" id="RHEA:43612"/>
        <dbReference type="Rhea" id="RHEA-COMP:10630"/>
        <dbReference type="Rhea" id="RHEA-COMP:10631"/>
        <dbReference type="ChEBI" id="CHEBI:15378"/>
        <dbReference type="ChEBI" id="CHEBI:57856"/>
        <dbReference type="ChEBI" id="CHEBI:59789"/>
        <dbReference type="ChEBI" id="CHEBI:65315"/>
        <dbReference type="ChEBI" id="CHEBI:74447"/>
    </reaction>
</comment>
<comment type="similarity">
    <text evidence="1">Belongs to the class I-like SAM-binding methyltransferase superfamily. RNA M5U methyltransferase family. TrmA subfamily.</text>
</comment>
<name>TRMA_NEIG2</name>
<keyword id="KW-0489">Methyltransferase</keyword>
<keyword id="KW-0949">S-adenosyl-L-methionine</keyword>
<keyword id="KW-0808">Transferase</keyword>
<keyword id="KW-0819">tRNA processing</keyword>
<dbReference type="EC" id="2.1.1.-" evidence="1"/>
<dbReference type="EC" id="2.1.1.35" evidence="1"/>
<dbReference type="EMBL" id="CP001050">
    <property type="protein sequence ID" value="ACF30209.1"/>
    <property type="molecule type" value="Genomic_DNA"/>
</dbReference>
<dbReference type="RefSeq" id="WP_003691661.1">
    <property type="nucleotide sequence ID" value="NC_011035.1"/>
</dbReference>
<dbReference type="SMR" id="B4RN45"/>
<dbReference type="GeneID" id="66753532"/>
<dbReference type="KEGG" id="ngk:NGK_1555"/>
<dbReference type="HOGENOM" id="CLU_043022_0_0_4"/>
<dbReference type="Proteomes" id="UP000002564">
    <property type="component" value="Chromosome"/>
</dbReference>
<dbReference type="GO" id="GO:0005829">
    <property type="term" value="C:cytosol"/>
    <property type="evidence" value="ECO:0007669"/>
    <property type="project" value="TreeGrafter"/>
</dbReference>
<dbReference type="GO" id="GO:0019843">
    <property type="term" value="F:rRNA binding"/>
    <property type="evidence" value="ECO:0007669"/>
    <property type="project" value="TreeGrafter"/>
</dbReference>
<dbReference type="GO" id="GO:0030697">
    <property type="term" value="F:tRNA (uracil(54)-C5)-methyltransferase activity, S-adenosyl methionine-dependent"/>
    <property type="evidence" value="ECO:0007669"/>
    <property type="project" value="UniProtKB-UniRule"/>
</dbReference>
<dbReference type="GO" id="GO:0000049">
    <property type="term" value="F:tRNA binding"/>
    <property type="evidence" value="ECO:0007669"/>
    <property type="project" value="TreeGrafter"/>
</dbReference>
<dbReference type="GO" id="GO:0030488">
    <property type="term" value="P:tRNA methylation"/>
    <property type="evidence" value="ECO:0007669"/>
    <property type="project" value="UniProtKB-UniRule"/>
</dbReference>
<dbReference type="CDD" id="cd02440">
    <property type="entry name" value="AdoMet_MTases"/>
    <property type="match status" value="1"/>
</dbReference>
<dbReference type="FunFam" id="2.40.50.1070:FF:000001">
    <property type="entry name" value="tRNA/tmRNA (uracil-C(5))-methyltransferase"/>
    <property type="match status" value="1"/>
</dbReference>
<dbReference type="FunFam" id="3.40.50.150:FF:000012">
    <property type="entry name" value="tRNA/tmRNA (uracil-C(5))-methyltransferase"/>
    <property type="match status" value="1"/>
</dbReference>
<dbReference type="Gene3D" id="2.40.50.1070">
    <property type="match status" value="1"/>
</dbReference>
<dbReference type="Gene3D" id="3.40.50.150">
    <property type="entry name" value="Vaccinia Virus protein VP39"/>
    <property type="match status" value="1"/>
</dbReference>
<dbReference type="HAMAP" id="MF_01011">
    <property type="entry name" value="RNA_methyltr_TrmA"/>
    <property type="match status" value="1"/>
</dbReference>
<dbReference type="InterPro" id="IPR030390">
    <property type="entry name" value="MeTrfase_TrmA_AS"/>
</dbReference>
<dbReference type="InterPro" id="IPR029063">
    <property type="entry name" value="SAM-dependent_MTases_sf"/>
</dbReference>
<dbReference type="InterPro" id="IPR011869">
    <property type="entry name" value="TrmA_MeTrfase"/>
</dbReference>
<dbReference type="InterPro" id="IPR010280">
    <property type="entry name" value="U5_MeTrfase_fam"/>
</dbReference>
<dbReference type="NCBIfam" id="TIGR02143">
    <property type="entry name" value="trmA_only"/>
    <property type="match status" value="1"/>
</dbReference>
<dbReference type="PANTHER" id="PTHR47790">
    <property type="entry name" value="TRNA/TMRNA (URACIL-C(5))-METHYLTRANSFERASE"/>
    <property type="match status" value="1"/>
</dbReference>
<dbReference type="PANTHER" id="PTHR47790:SF2">
    <property type="entry name" value="TRNA_TMRNA (URACIL-C(5))-METHYLTRANSFERASE"/>
    <property type="match status" value="1"/>
</dbReference>
<dbReference type="Pfam" id="PF05958">
    <property type="entry name" value="tRNA_U5-meth_tr"/>
    <property type="match status" value="1"/>
</dbReference>
<dbReference type="SUPFAM" id="SSF53335">
    <property type="entry name" value="S-adenosyl-L-methionine-dependent methyltransferases"/>
    <property type="match status" value="1"/>
</dbReference>
<dbReference type="PROSITE" id="PS51687">
    <property type="entry name" value="SAM_MT_RNA_M5U"/>
    <property type="match status" value="1"/>
</dbReference>
<dbReference type="PROSITE" id="PS01230">
    <property type="entry name" value="TRMA_1"/>
    <property type="match status" value="1"/>
</dbReference>
<reference key="1">
    <citation type="journal article" date="2008" name="J. Bacteriol.">
        <title>Complete genome sequence of Neisseria gonorrhoeae NCCP11945.</title>
        <authorList>
            <person name="Chung G.T."/>
            <person name="Yoo J.S."/>
            <person name="Oh H.B."/>
            <person name="Lee Y.S."/>
            <person name="Cha S.H."/>
            <person name="Kim S.J."/>
            <person name="Yoo C.K."/>
        </authorList>
    </citation>
    <scope>NUCLEOTIDE SEQUENCE [LARGE SCALE GENOMIC DNA]</scope>
    <source>
        <strain>NCCP11945</strain>
    </source>
</reference>
<sequence length="362" mass="41306">MNDYTQQLQGKKDYLKTLFAGLDVPEWEVYESPDKHYRMRAEFRIWHEGGEMFYAMFEKGQKASGASLIRCDRFDAASEAVNCLMPELIAVAAQSAELRNHWYAVEFLSTLSGEMLVTMIYHKRLDDEWMKAAQALQQQLDISVIGRSRGQKIVLKQDYVTETLRVGDRDFHYRQIEGSFTQPNAAVCRKMLEWACRAAEGLGGDLLELYCGNGNFTLPLSRYFRQVLATEISKTSVSAAQWNIEANWIGNIKIARLSAEEFTEAYTGKREFTRLKESGIVLTDYAFSTIFVDPPRAGIDEETLKLVSQFDNIIYISCNPETLRANLDTLTETHTVGRAALFDQFPFTHHIESGVLLKKKIL</sequence>